<accession>Q6D5V5</accession>
<proteinExistence type="inferred from homology"/>
<feature type="chain" id="PRO_0000249997" description="Anhydro-N-acetylmuramic acid kinase">
    <location>
        <begin position="1"/>
        <end position="370"/>
    </location>
</feature>
<feature type="binding site" evidence="1">
    <location>
        <begin position="12"/>
        <end position="19"/>
    </location>
    <ligand>
        <name>ATP</name>
        <dbReference type="ChEBI" id="CHEBI:30616"/>
    </ligand>
</feature>
<gene>
    <name evidence="1" type="primary">anmK</name>
    <name type="ordered locus">ECA1933</name>
</gene>
<keyword id="KW-0067">ATP-binding</keyword>
<keyword id="KW-0119">Carbohydrate metabolism</keyword>
<keyword id="KW-0418">Kinase</keyword>
<keyword id="KW-0547">Nucleotide-binding</keyword>
<keyword id="KW-1185">Reference proteome</keyword>
<keyword id="KW-0808">Transferase</keyword>
<organism>
    <name type="scientific">Pectobacterium atrosepticum (strain SCRI 1043 / ATCC BAA-672)</name>
    <name type="common">Erwinia carotovora subsp. atroseptica</name>
    <dbReference type="NCBI Taxonomy" id="218491"/>
    <lineage>
        <taxon>Bacteria</taxon>
        <taxon>Pseudomonadati</taxon>
        <taxon>Pseudomonadota</taxon>
        <taxon>Gammaproteobacteria</taxon>
        <taxon>Enterobacterales</taxon>
        <taxon>Pectobacteriaceae</taxon>
        <taxon>Pectobacterium</taxon>
    </lineage>
</organism>
<sequence>MRSGRYIGVMSGTSLDGVDVVLAAIDEHTVAQQARYCHPIPQDIKMAILGMCQGQAVTLSALGQLDTRLGILFAEAVLTLLKETGLRAQGITAIGCHGQTVWHEPTGEAPCTLQIGDNNRVAALTGITTIGDFRRRDLAYGGQGAPLVPSFHHALLLHPVERRIVLNIGGIANLSLLVPGAPVRGYDTGPGNMLLDAWIWRHCAQPYDKDALWAINGQANPLLLRRMLTDPYFALRAPKSTGREYFNLGWLERMLAGLPPIAPQDVQATLVELTAISIADQVLLVGGCERLLVCGGGAHNPLIMARLSALLPGIEVSTTDECGVNGDDMEALAFAWLASRTLSGLPGNLPSVTGASQETVLGAIYPVNVD</sequence>
<dbReference type="EC" id="2.7.1.170" evidence="1"/>
<dbReference type="EMBL" id="BX950851">
    <property type="protein sequence ID" value="CAG74836.1"/>
    <property type="molecule type" value="Genomic_DNA"/>
</dbReference>
<dbReference type="RefSeq" id="WP_011093499.1">
    <property type="nucleotide sequence ID" value="NC_004547.2"/>
</dbReference>
<dbReference type="SMR" id="Q6D5V5"/>
<dbReference type="STRING" id="218491.ECA1933"/>
<dbReference type="GeneID" id="57209362"/>
<dbReference type="KEGG" id="eca:ECA1933"/>
<dbReference type="PATRIC" id="fig|218491.5.peg.1966"/>
<dbReference type="eggNOG" id="COG2377">
    <property type="taxonomic scope" value="Bacteria"/>
</dbReference>
<dbReference type="HOGENOM" id="CLU_038782_0_0_6"/>
<dbReference type="OrthoDB" id="9763949at2"/>
<dbReference type="UniPathway" id="UPA00343"/>
<dbReference type="UniPathway" id="UPA00544"/>
<dbReference type="Proteomes" id="UP000007966">
    <property type="component" value="Chromosome"/>
</dbReference>
<dbReference type="GO" id="GO:0005524">
    <property type="term" value="F:ATP binding"/>
    <property type="evidence" value="ECO:0007669"/>
    <property type="project" value="UniProtKB-UniRule"/>
</dbReference>
<dbReference type="GO" id="GO:0016301">
    <property type="term" value="F:kinase activity"/>
    <property type="evidence" value="ECO:0007669"/>
    <property type="project" value="UniProtKB-KW"/>
</dbReference>
<dbReference type="GO" id="GO:0016773">
    <property type="term" value="F:phosphotransferase activity, alcohol group as acceptor"/>
    <property type="evidence" value="ECO:0007669"/>
    <property type="project" value="UniProtKB-UniRule"/>
</dbReference>
<dbReference type="GO" id="GO:0097175">
    <property type="term" value="P:1,6-anhydro-N-acetyl-beta-muramic acid catabolic process"/>
    <property type="evidence" value="ECO:0007669"/>
    <property type="project" value="UniProtKB-UniRule"/>
</dbReference>
<dbReference type="GO" id="GO:0006040">
    <property type="term" value="P:amino sugar metabolic process"/>
    <property type="evidence" value="ECO:0007669"/>
    <property type="project" value="InterPro"/>
</dbReference>
<dbReference type="GO" id="GO:0009254">
    <property type="term" value="P:peptidoglycan turnover"/>
    <property type="evidence" value="ECO:0007669"/>
    <property type="project" value="UniProtKB-UniRule"/>
</dbReference>
<dbReference type="CDD" id="cd24050">
    <property type="entry name" value="ASKHA_NBD_ANMK"/>
    <property type="match status" value="1"/>
</dbReference>
<dbReference type="Gene3D" id="3.30.420.40">
    <property type="match status" value="2"/>
</dbReference>
<dbReference type="HAMAP" id="MF_01270">
    <property type="entry name" value="AnhMurNAc_kinase"/>
    <property type="match status" value="1"/>
</dbReference>
<dbReference type="InterPro" id="IPR005338">
    <property type="entry name" value="Anhydro_N_Ac-Mur_kinase"/>
</dbReference>
<dbReference type="InterPro" id="IPR043129">
    <property type="entry name" value="ATPase_NBD"/>
</dbReference>
<dbReference type="NCBIfam" id="NF007138">
    <property type="entry name" value="PRK09585.1-1"/>
    <property type="match status" value="1"/>
</dbReference>
<dbReference type="NCBIfam" id="NF007139">
    <property type="entry name" value="PRK09585.1-3"/>
    <property type="match status" value="1"/>
</dbReference>
<dbReference type="PANTHER" id="PTHR30605">
    <property type="entry name" value="ANHYDRO-N-ACETYLMURAMIC ACID KINASE"/>
    <property type="match status" value="1"/>
</dbReference>
<dbReference type="PANTHER" id="PTHR30605:SF0">
    <property type="entry name" value="ANHYDRO-N-ACETYLMURAMIC ACID KINASE"/>
    <property type="match status" value="1"/>
</dbReference>
<dbReference type="Pfam" id="PF03702">
    <property type="entry name" value="AnmK"/>
    <property type="match status" value="1"/>
</dbReference>
<dbReference type="SUPFAM" id="SSF53067">
    <property type="entry name" value="Actin-like ATPase domain"/>
    <property type="match status" value="1"/>
</dbReference>
<name>ANMK_PECAS</name>
<comment type="function">
    <text evidence="1">Catalyzes the specific phosphorylation of 1,6-anhydro-N-acetylmuramic acid (anhMurNAc) with the simultaneous cleavage of the 1,6-anhydro ring, generating MurNAc-6-P. Is required for the utilization of anhMurNAc either imported from the medium or derived from its own cell wall murein, and thus plays a role in cell wall recycling.</text>
</comment>
<comment type="catalytic activity">
    <reaction evidence="1">
        <text>1,6-anhydro-N-acetyl-beta-muramate + ATP + H2O = N-acetyl-D-muramate 6-phosphate + ADP + H(+)</text>
        <dbReference type="Rhea" id="RHEA:24952"/>
        <dbReference type="ChEBI" id="CHEBI:15377"/>
        <dbReference type="ChEBI" id="CHEBI:15378"/>
        <dbReference type="ChEBI" id="CHEBI:30616"/>
        <dbReference type="ChEBI" id="CHEBI:58690"/>
        <dbReference type="ChEBI" id="CHEBI:58722"/>
        <dbReference type="ChEBI" id="CHEBI:456216"/>
        <dbReference type="EC" id="2.7.1.170"/>
    </reaction>
</comment>
<comment type="pathway">
    <text evidence="1">Amino-sugar metabolism; 1,6-anhydro-N-acetylmuramate degradation.</text>
</comment>
<comment type="pathway">
    <text evidence="1">Cell wall biogenesis; peptidoglycan recycling.</text>
</comment>
<comment type="similarity">
    <text evidence="1">Belongs to the anhydro-N-acetylmuramic acid kinase family.</text>
</comment>
<reference key="1">
    <citation type="journal article" date="2004" name="Proc. Natl. Acad. Sci. U.S.A.">
        <title>Genome sequence of the enterobacterial phytopathogen Erwinia carotovora subsp. atroseptica and characterization of virulence factors.</title>
        <authorList>
            <person name="Bell K.S."/>
            <person name="Sebaihia M."/>
            <person name="Pritchard L."/>
            <person name="Holden M.T.G."/>
            <person name="Hyman L.J."/>
            <person name="Holeva M.C."/>
            <person name="Thomson N.R."/>
            <person name="Bentley S.D."/>
            <person name="Churcher L.J.C."/>
            <person name="Mungall K."/>
            <person name="Atkin R."/>
            <person name="Bason N."/>
            <person name="Brooks K."/>
            <person name="Chillingworth T."/>
            <person name="Clark K."/>
            <person name="Doggett J."/>
            <person name="Fraser A."/>
            <person name="Hance Z."/>
            <person name="Hauser H."/>
            <person name="Jagels K."/>
            <person name="Moule S."/>
            <person name="Norbertczak H."/>
            <person name="Ormond D."/>
            <person name="Price C."/>
            <person name="Quail M.A."/>
            <person name="Sanders M."/>
            <person name="Walker D."/>
            <person name="Whitehead S."/>
            <person name="Salmond G.P.C."/>
            <person name="Birch P.R.J."/>
            <person name="Parkhill J."/>
            <person name="Toth I.K."/>
        </authorList>
    </citation>
    <scope>NUCLEOTIDE SEQUENCE [LARGE SCALE GENOMIC DNA]</scope>
    <source>
        <strain>SCRI 1043 / ATCC BAA-672</strain>
    </source>
</reference>
<evidence type="ECO:0000255" key="1">
    <source>
        <dbReference type="HAMAP-Rule" id="MF_01270"/>
    </source>
</evidence>
<protein>
    <recommendedName>
        <fullName evidence="1">Anhydro-N-acetylmuramic acid kinase</fullName>
        <ecNumber evidence="1">2.7.1.170</ecNumber>
    </recommendedName>
    <alternativeName>
        <fullName evidence="1">AnhMurNAc kinase</fullName>
    </alternativeName>
</protein>